<gene>
    <name type="primary">ths</name>
    <name type="synonym">thsA</name>
    <name type="ordered locus">PYRAB00180</name>
    <name type="ORF">PAB2341</name>
</gene>
<accession>Q9V2Q7</accession>
<accession>G8ZFJ5</accession>
<comment type="function">
    <text evidence="1">Molecular chaperone; binds unfolded polypeptides in vitro, and has a weak ATPase activity.</text>
</comment>
<comment type="subunit">
    <text evidence="1">Forms an oligomeric complex of eight-membered rings.</text>
</comment>
<comment type="similarity">
    <text evidence="3">Belongs to the TCP-1 chaperonin family.</text>
</comment>
<proteinExistence type="inferred from homology"/>
<organism>
    <name type="scientific">Pyrococcus abyssi (strain GE5 / Orsay)</name>
    <dbReference type="NCBI Taxonomy" id="272844"/>
    <lineage>
        <taxon>Archaea</taxon>
        <taxon>Methanobacteriati</taxon>
        <taxon>Methanobacteriota</taxon>
        <taxon>Thermococci</taxon>
        <taxon>Thermococcales</taxon>
        <taxon>Thermococcaceae</taxon>
        <taxon>Pyrococcus</taxon>
    </lineage>
</organism>
<feature type="chain" id="PRO_0000128395" description="Thermosome subunit">
    <location>
        <begin position="1"/>
        <end position="550"/>
    </location>
</feature>
<feature type="region of interest" description="Disordered" evidence="2">
    <location>
        <begin position="529"/>
        <end position="550"/>
    </location>
</feature>
<feature type="compositionally biased region" description="Low complexity" evidence="2">
    <location>
        <begin position="541"/>
        <end position="550"/>
    </location>
</feature>
<evidence type="ECO:0000250" key="1"/>
<evidence type="ECO:0000256" key="2">
    <source>
        <dbReference type="SAM" id="MobiDB-lite"/>
    </source>
</evidence>
<evidence type="ECO:0000305" key="3"/>
<keyword id="KW-0067">ATP-binding</keyword>
<keyword id="KW-0143">Chaperone</keyword>
<keyword id="KW-0547">Nucleotide-binding</keyword>
<sequence>MAQLAGQPILILPEGTQRYVGRDAQRMNILAARIIAETVRTTLGPKGMDKMLVDSLGDIVITNDGATILDEMDIQHPAAKMMVEVAKTQDKEAGDGTTTAVVIAGELLKKAEELLDQNIHPSIVIKGYMLAAEKAQEILDSIAKEVKPDDEEVLLKAAMTAITGKAAEEEREYLAKLAVEAVKLVAEEKDGKFKVDIDNIKFEKKEGGAVSDTKLIRGVVIDKEVVHPGMPKRVEKAKIALINDALEVKETETDAEIRITSPEQLQAFLEQEEKMLKEMVDKIKEVGANVVFVQKGIDDLAQHYLAKYGILAVRRVKKSDMEKLAKATGAKIVTNIRDLTPEDLGEAELVEERKVAGENMIFVEGCKNPKAVTILIRGGTEHVVDEVERALEDAVKVVKDILEDGKIIAGGGAAEIELSIKLDEYAKEVGGKEQLAIEAFAEALKVIPRTLAENAGLDPIETLVKVIAAHKEKGPTIGIDVYEGEPADMMERGVIEPVRVKKQAIKSASEAAIMILRIDDVIAAQKLEKEKEGEKGGGGSEDFSSSSDLD</sequence>
<reference key="1">
    <citation type="journal article" date="2003" name="Mol. Microbiol.">
        <title>An integrated analysis of the genome of the hyperthermophilic archaeon Pyrococcus abyssi.</title>
        <authorList>
            <person name="Cohen G.N."/>
            <person name="Barbe V."/>
            <person name="Flament D."/>
            <person name="Galperin M."/>
            <person name="Heilig R."/>
            <person name="Lecompte O."/>
            <person name="Poch O."/>
            <person name="Prieur D."/>
            <person name="Querellou J."/>
            <person name="Ripp R."/>
            <person name="Thierry J.-C."/>
            <person name="Van der Oost J."/>
            <person name="Weissenbach J."/>
            <person name="Zivanovic Y."/>
            <person name="Forterre P."/>
        </authorList>
    </citation>
    <scope>NUCLEOTIDE SEQUENCE [LARGE SCALE GENOMIC DNA]</scope>
    <source>
        <strain>GE5 / Orsay</strain>
    </source>
</reference>
<reference key="2">
    <citation type="journal article" date="2012" name="Curr. Microbiol.">
        <title>Re-annotation of two hyperthermophilic archaea Pyrococcus abyssi GE5 and Pyrococcus furiosus DSM 3638.</title>
        <authorList>
            <person name="Gao J."/>
            <person name="Wang J."/>
        </authorList>
    </citation>
    <scope>GENOME REANNOTATION</scope>
    <source>
        <strain>GE5 / Orsay</strain>
    </source>
</reference>
<protein>
    <recommendedName>
        <fullName>Thermosome subunit</fullName>
    </recommendedName>
    <alternativeName>
        <fullName>Chaperonin subunit</fullName>
    </alternativeName>
</protein>
<dbReference type="EMBL" id="AJ248283">
    <property type="protein sequence ID" value="CAB48941.1"/>
    <property type="molecule type" value="Genomic_DNA"/>
</dbReference>
<dbReference type="EMBL" id="HE613800">
    <property type="protein sequence ID" value="CCE69386.1"/>
    <property type="molecule type" value="Genomic_DNA"/>
</dbReference>
<dbReference type="PIR" id="F75186">
    <property type="entry name" value="F75186"/>
</dbReference>
<dbReference type="RefSeq" id="WP_010867141.1">
    <property type="nucleotide sequence ID" value="NC_000868.1"/>
</dbReference>
<dbReference type="SMR" id="Q9V2Q7"/>
<dbReference type="STRING" id="272844.PAB2341"/>
<dbReference type="KEGG" id="pab:PAB2341"/>
<dbReference type="PATRIC" id="fig|272844.11.peg.20"/>
<dbReference type="eggNOG" id="arCOG01257">
    <property type="taxonomic scope" value="Archaea"/>
</dbReference>
<dbReference type="HOGENOM" id="CLU_008891_7_3_2"/>
<dbReference type="OrthoDB" id="9362at2157"/>
<dbReference type="PhylomeDB" id="Q9V2Q7"/>
<dbReference type="Proteomes" id="UP000000810">
    <property type="component" value="Chromosome"/>
</dbReference>
<dbReference type="Proteomes" id="UP000009139">
    <property type="component" value="Chromosome"/>
</dbReference>
<dbReference type="GO" id="GO:0005524">
    <property type="term" value="F:ATP binding"/>
    <property type="evidence" value="ECO:0007669"/>
    <property type="project" value="UniProtKB-KW"/>
</dbReference>
<dbReference type="GO" id="GO:0016887">
    <property type="term" value="F:ATP hydrolysis activity"/>
    <property type="evidence" value="ECO:0007669"/>
    <property type="project" value="InterPro"/>
</dbReference>
<dbReference type="GO" id="GO:0140662">
    <property type="term" value="F:ATP-dependent protein folding chaperone"/>
    <property type="evidence" value="ECO:0007669"/>
    <property type="project" value="InterPro"/>
</dbReference>
<dbReference type="GO" id="GO:0051082">
    <property type="term" value="F:unfolded protein binding"/>
    <property type="evidence" value="ECO:0007669"/>
    <property type="project" value="InterPro"/>
</dbReference>
<dbReference type="CDD" id="cd03343">
    <property type="entry name" value="cpn60"/>
    <property type="match status" value="1"/>
</dbReference>
<dbReference type="FunFam" id="1.10.560.10:FF:000017">
    <property type="entry name" value="T-complex protein 1 subunit eta"/>
    <property type="match status" value="1"/>
</dbReference>
<dbReference type="Gene3D" id="3.50.7.10">
    <property type="entry name" value="GroEL"/>
    <property type="match status" value="1"/>
</dbReference>
<dbReference type="Gene3D" id="1.10.560.10">
    <property type="entry name" value="GroEL-like equatorial domain"/>
    <property type="match status" value="1"/>
</dbReference>
<dbReference type="Gene3D" id="3.30.260.10">
    <property type="entry name" value="TCP-1-like chaperonin intermediate domain"/>
    <property type="match status" value="1"/>
</dbReference>
<dbReference type="InterPro" id="IPR017998">
    <property type="entry name" value="Chaperone_TCP-1"/>
</dbReference>
<dbReference type="InterPro" id="IPR002194">
    <property type="entry name" value="Chaperonin_TCP-1_CS"/>
</dbReference>
<dbReference type="InterPro" id="IPR002423">
    <property type="entry name" value="Cpn60/GroEL/TCP-1"/>
</dbReference>
<dbReference type="InterPro" id="IPR027409">
    <property type="entry name" value="GroEL-like_apical_dom_sf"/>
</dbReference>
<dbReference type="InterPro" id="IPR027413">
    <property type="entry name" value="GROEL-like_equatorial_sf"/>
</dbReference>
<dbReference type="InterPro" id="IPR027410">
    <property type="entry name" value="TCP-1-like_intermed_sf"/>
</dbReference>
<dbReference type="InterPro" id="IPR053374">
    <property type="entry name" value="TCP-1_chaperonin"/>
</dbReference>
<dbReference type="InterPro" id="IPR054827">
    <property type="entry name" value="thermosome_alpha"/>
</dbReference>
<dbReference type="InterPro" id="IPR012714">
    <property type="entry name" value="Thermosome_arc"/>
</dbReference>
<dbReference type="NCBIfam" id="NF041082">
    <property type="entry name" value="thermosome_alpha"/>
    <property type="match status" value="1"/>
</dbReference>
<dbReference type="NCBIfam" id="TIGR02339">
    <property type="entry name" value="thermosome_arch"/>
    <property type="match status" value="1"/>
</dbReference>
<dbReference type="NCBIfam" id="NF041083">
    <property type="entry name" value="thermosome_beta"/>
    <property type="match status" value="1"/>
</dbReference>
<dbReference type="PANTHER" id="PTHR11353">
    <property type="entry name" value="CHAPERONIN"/>
    <property type="match status" value="1"/>
</dbReference>
<dbReference type="Pfam" id="PF00118">
    <property type="entry name" value="Cpn60_TCP1"/>
    <property type="match status" value="1"/>
</dbReference>
<dbReference type="PRINTS" id="PR00304">
    <property type="entry name" value="TCOMPLEXTCP1"/>
</dbReference>
<dbReference type="SUPFAM" id="SSF52029">
    <property type="entry name" value="GroEL apical domain-like"/>
    <property type="match status" value="1"/>
</dbReference>
<dbReference type="SUPFAM" id="SSF48592">
    <property type="entry name" value="GroEL equatorial domain-like"/>
    <property type="match status" value="1"/>
</dbReference>
<dbReference type="SUPFAM" id="SSF54849">
    <property type="entry name" value="GroEL-intermediate domain like"/>
    <property type="match status" value="1"/>
</dbReference>
<dbReference type="PROSITE" id="PS00750">
    <property type="entry name" value="TCP1_1"/>
    <property type="match status" value="1"/>
</dbReference>
<dbReference type="PROSITE" id="PS00751">
    <property type="entry name" value="TCP1_2"/>
    <property type="match status" value="1"/>
</dbReference>
<dbReference type="PROSITE" id="PS00995">
    <property type="entry name" value="TCP1_3"/>
    <property type="match status" value="1"/>
</dbReference>
<name>THS_PYRAB</name>